<gene>
    <name evidence="1" type="primary">trpA</name>
    <name type="ordered locus">STK_12320</name>
</gene>
<protein>
    <recommendedName>
        <fullName evidence="1">Tryptophan synthase alpha chain</fullName>
        <ecNumber evidence="1">4.2.1.20</ecNumber>
    </recommendedName>
</protein>
<proteinExistence type="inferred from homology"/>
<keyword id="KW-0028">Amino-acid biosynthesis</keyword>
<keyword id="KW-0057">Aromatic amino acid biosynthesis</keyword>
<keyword id="KW-0456">Lyase</keyword>
<keyword id="KW-1185">Reference proteome</keyword>
<keyword id="KW-0822">Tryptophan biosynthesis</keyword>
<sequence length="245" mass="27559">MRRMLVTYMTLGYPNLESFYQFIEKSVELGTDILEIGLPPKYAKYDGPVIRKSYKAVTSWLKDYITPLKEVRKKVNIPIIILTYLEDYLSNLDNFLTTLHEIGIDGVLFPDLLIDFIDEYEEYVSKIKGKGVKAVLFTGPSLPDNLIIKASRISDIFLYYGVRPTTGIIIPVSVDSLITRVRNLVQNKLVVGFGLNDFNDLRKALSAGADGVAIGTAFIEEIEKNGIQSALHLVKTIRGILDEYS</sequence>
<dbReference type="EC" id="4.2.1.20" evidence="1"/>
<dbReference type="EMBL" id="BA000023">
    <property type="protein sequence ID" value="BAB66273.1"/>
    <property type="molecule type" value="Genomic_DNA"/>
</dbReference>
<dbReference type="RefSeq" id="WP_010979251.1">
    <property type="nucleotide sequence ID" value="NC_003106.2"/>
</dbReference>
<dbReference type="SMR" id="Q971Z6"/>
<dbReference type="STRING" id="273063.STK_12320"/>
<dbReference type="GeneID" id="1459230"/>
<dbReference type="KEGG" id="sto:STK_12320"/>
<dbReference type="PATRIC" id="fig|273063.9.peg.1391"/>
<dbReference type="eggNOG" id="arCOG01086">
    <property type="taxonomic scope" value="Archaea"/>
</dbReference>
<dbReference type="OrthoDB" id="25658at2157"/>
<dbReference type="UniPathway" id="UPA00035">
    <property type="reaction ID" value="UER00044"/>
</dbReference>
<dbReference type="Proteomes" id="UP000001015">
    <property type="component" value="Chromosome"/>
</dbReference>
<dbReference type="GO" id="GO:0005829">
    <property type="term" value="C:cytosol"/>
    <property type="evidence" value="ECO:0007669"/>
    <property type="project" value="TreeGrafter"/>
</dbReference>
<dbReference type="GO" id="GO:0004834">
    <property type="term" value="F:tryptophan synthase activity"/>
    <property type="evidence" value="ECO:0007669"/>
    <property type="project" value="UniProtKB-UniRule"/>
</dbReference>
<dbReference type="CDD" id="cd04724">
    <property type="entry name" value="Tryptophan_synthase_alpha"/>
    <property type="match status" value="1"/>
</dbReference>
<dbReference type="Gene3D" id="3.20.20.70">
    <property type="entry name" value="Aldolase class I"/>
    <property type="match status" value="1"/>
</dbReference>
<dbReference type="HAMAP" id="MF_00131">
    <property type="entry name" value="Trp_synth_alpha"/>
    <property type="match status" value="1"/>
</dbReference>
<dbReference type="InterPro" id="IPR013785">
    <property type="entry name" value="Aldolase_TIM"/>
</dbReference>
<dbReference type="InterPro" id="IPR011060">
    <property type="entry name" value="RibuloseP-bd_barrel"/>
</dbReference>
<dbReference type="InterPro" id="IPR018204">
    <property type="entry name" value="Trp_synthase_alpha_AS"/>
</dbReference>
<dbReference type="InterPro" id="IPR002028">
    <property type="entry name" value="Trp_synthase_suA"/>
</dbReference>
<dbReference type="NCBIfam" id="NF009621">
    <property type="entry name" value="PRK13125.1"/>
    <property type="match status" value="1"/>
</dbReference>
<dbReference type="NCBIfam" id="TIGR00262">
    <property type="entry name" value="trpA"/>
    <property type="match status" value="1"/>
</dbReference>
<dbReference type="PANTHER" id="PTHR43406:SF1">
    <property type="entry name" value="TRYPTOPHAN SYNTHASE ALPHA CHAIN, CHLOROPLASTIC"/>
    <property type="match status" value="1"/>
</dbReference>
<dbReference type="PANTHER" id="PTHR43406">
    <property type="entry name" value="TRYPTOPHAN SYNTHASE, ALPHA CHAIN"/>
    <property type="match status" value="1"/>
</dbReference>
<dbReference type="Pfam" id="PF00290">
    <property type="entry name" value="Trp_syntA"/>
    <property type="match status" value="1"/>
</dbReference>
<dbReference type="SUPFAM" id="SSF51366">
    <property type="entry name" value="Ribulose-phoshate binding barrel"/>
    <property type="match status" value="1"/>
</dbReference>
<dbReference type="PROSITE" id="PS00167">
    <property type="entry name" value="TRP_SYNTHASE_ALPHA"/>
    <property type="match status" value="1"/>
</dbReference>
<name>TRPA_SULTO</name>
<comment type="function">
    <text evidence="1">The alpha subunit is responsible for the aldol cleavage of indoleglycerol phosphate to indole and glyceraldehyde 3-phosphate.</text>
</comment>
<comment type="catalytic activity">
    <reaction evidence="1">
        <text>(1S,2R)-1-C-(indol-3-yl)glycerol 3-phosphate + L-serine = D-glyceraldehyde 3-phosphate + L-tryptophan + H2O</text>
        <dbReference type="Rhea" id="RHEA:10532"/>
        <dbReference type="ChEBI" id="CHEBI:15377"/>
        <dbReference type="ChEBI" id="CHEBI:33384"/>
        <dbReference type="ChEBI" id="CHEBI:57912"/>
        <dbReference type="ChEBI" id="CHEBI:58866"/>
        <dbReference type="ChEBI" id="CHEBI:59776"/>
        <dbReference type="EC" id="4.2.1.20"/>
    </reaction>
</comment>
<comment type="pathway">
    <text evidence="1">Amino-acid biosynthesis; L-tryptophan biosynthesis; L-tryptophan from chorismate: step 5/5.</text>
</comment>
<comment type="subunit">
    <text evidence="1">Tetramer of two alpha and two beta chains.</text>
</comment>
<comment type="similarity">
    <text evidence="1">Belongs to the TrpA family.</text>
</comment>
<reference key="1">
    <citation type="journal article" date="2001" name="DNA Res.">
        <title>Complete genome sequence of an aerobic thermoacidophilic Crenarchaeon, Sulfolobus tokodaii strain7.</title>
        <authorList>
            <person name="Kawarabayasi Y."/>
            <person name="Hino Y."/>
            <person name="Horikawa H."/>
            <person name="Jin-no K."/>
            <person name="Takahashi M."/>
            <person name="Sekine M."/>
            <person name="Baba S."/>
            <person name="Ankai A."/>
            <person name="Kosugi H."/>
            <person name="Hosoyama A."/>
            <person name="Fukui S."/>
            <person name="Nagai Y."/>
            <person name="Nishijima K."/>
            <person name="Otsuka R."/>
            <person name="Nakazawa H."/>
            <person name="Takamiya M."/>
            <person name="Kato Y."/>
            <person name="Yoshizawa T."/>
            <person name="Tanaka T."/>
            <person name="Kudoh Y."/>
            <person name="Yamazaki J."/>
            <person name="Kushida N."/>
            <person name="Oguchi A."/>
            <person name="Aoki K."/>
            <person name="Masuda S."/>
            <person name="Yanagii M."/>
            <person name="Nishimura M."/>
            <person name="Yamagishi A."/>
            <person name="Oshima T."/>
            <person name="Kikuchi H."/>
        </authorList>
    </citation>
    <scope>NUCLEOTIDE SEQUENCE [LARGE SCALE GENOMIC DNA]</scope>
    <source>
        <strain>DSM 16993 / JCM 10545 / NBRC 100140 / 7</strain>
    </source>
</reference>
<evidence type="ECO:0000255" key="1">
    <source>
        <dbReference type="HAMAP-Rule" id="MF_00131"/>
    </source>
</evidence>
<accession>Q971Z6</accession>
<organism>
    <name type="scientific">Sulfurisphaera tokodaii (strain DSM 16993 / JCM 10545 / NBRC 100140 / 7)</name>
    <name type="common">Sulfolobus tokodaii</name>
    <dbReference type="NCBI Taxonomy" id="273063"/>
    <lineage>
        <taxon>Archaea</taxon>
        <taxon>Thermoproteota</taxon>
        <taxon>Thermoprotei</taxon>
        <taxon>Sulfolobales</taxon>
        <taxon>Sulfolobaceae</taxon>
        <taxon>Sulfurisphaera</taxon>
    </lineage>
</organism>
<feature type="chain" id="PRO_0000098901" description="Tryptophan synthase alpha chain">
    <location>
        <begin position="1"/>
        <end position="245"/>
    </location>
</feature>
<feature type="active site" description="Proton acceptor" evidence="1">
    <location>
        <position position="35"/>
    </location>
</feature>
<feature type="active site" description="Proton acceptor" evidence="1">
    <location>
        <position position="46"/>
    </location>
</feature>